<dbReference type="EMBL" id="AM933172">
    <property type="protein sequence ID" value="CAR32785.1"/>
    <property type="molecule type" value="Genomic_DNA"/>
</dbReference>
<dbReference type="RefSeq" id="WP_000156284.1">
    <property type="nucleotide sequence ID" value="NC_011294.1"/>
</dbReference>
<dbReference type="KEGG" id="set:SEN1204"/>
<dbReference type="HOGENOM" id="CLU_133645_0_0_6"/>
<dbReference type="Proteomes" id="UP000000613">
    <property type="component" value="Chromosome"/>
</dbReference>
<dbReference type="GO" id="GO:0005886">
    <property type="term" value="C:plasma membrane"/>
    <property type="evidence" value="ECO:0007669"/>
    <property type="project" value="UniProtKB-SubCell"/>
</dbReference>
<dbReference type="HAMAP" id="MF_01071">
    <property type="entry name" value="UPF0266"/>
    <property type="match status" value="1"/>
</dbReference>
<dbReference type="InterPro" id="IPR009328">
    <property type="entry name" value="DUF986"/>
</dbReference>
<dbReference type="NCBIfam" id="NF002791">
    <property type="entry name" value="PRK02913.1"/>
    <property type="match status" value="1"/>
</dbReference>
<dbReference type="Pfam" id="PF06173">
    <property type="entry name" value="DUF986"/>
    <property type="match status" value="1"/>
</dbReference>
<dbReference type="PIRSF" id="PIRSF020687">
    <property type="entry name" value="UCP020687"/>
    <property type="match status" value="1"/>
</dbReference>
<comment type="subcellular location">
    <subcellularLocation>
        <location evidence="1">Cell inner membrane</location>
        <topology evidence="1">Multi-pass membrane protein</topology>
    </subcellularLocation>
</comment>
<comment type="similarity">
    <text evidence="1">Belongs to the UPF0266 family.</text>
</comment>
<sequence>MTITDLVLILFIAALLAYALYDQFIMPRRNGPTLLSIALLRRGRVDSVIFVGLVAILIYNNVTSHGAQMTTWLLSALALMGFYIFWIRTPRIIFKQRGFFFANVWIEYNRIKEMNLSEDGVLVMQLEQRRLLIRVRNIDNLEKIYKLLIENQ</sequence>
<evidence type="ECO:0000255" key="1">
    <source>
        <dbReference type="HAMAP-Rule" id="MF_01071"/>
    </source>
</evidence>
<proteinExistence type="inferred from homology"/>
<organism>
    <name type="scientific">Salmonella enteritidis PT4 (strain P125109)</name>
    <dbReference type="NCBI Taxonomy" id="550537"/>
    <lineage>
        <taxon>Bacteria</taxon>
        <taxon>Pseudomonadati</taxon>
        <taxon>Pseudomonadota</taxon>
        <taxon>Gammaproteobacteria</taxon>
        <taxon>Enterobacterales</taxon>
        <taxon>Enterobacteriaceae</taxon>
        <taxon>Salmonella</taxon>
    </lineage>
</organism>
<name>YOBD_SALEP</name>
<gene>
    <name evidence="1" type="primary">yobD</name>
    <name type="ordered locus">SEN1204</name>
</gene>
<keyword id="KW-0997">Cell inner membrane</keyword>
<keyword id="KW-1003">Cell membrane</keyword>
<keyword id="KW-0472">Membrane</keyword>
<keyword id="KW-0812">Transmembrane</keyword>
<keyword id="KW-1133">Transmembrane helix</keyword>
<feature type="chain" id="PRO_1000136647" description="UPF0266 membrane protein YobD">
    <location>
        <begin position="1"/>
        <end position="152"/>
    </location>
</feature>
<feature type="transmembrane region" description="Helical" evidence="1">
    <location>
        <begin position="6"/>
        <end position="26"/>
    </location>
</feature>
<feature type="transmembrane region" description="Helical" evidence="1">
    <location>
        <begin position="45"/>
        <end position="65"/>
    </location>
</feature>
<feature type="transmembrane region" description="Helical" evidence="1">
    <location>
        <begin position="67"/>
        <end position="87"/>
    </location>
</feature>
<accession>B5R2T8</accession>
<reference key="1">
    <citation type="journal article" date="2008" name="Genome Res.">
        <title>Comparative genome analysis of Salmonella enteritidis PT4 and Salmonella gallinarum 287/91 provides insights into evolutionary and host adaptation pathways.</title>
        <authorList>
            <person name="Thomson N.R."/>
            <person name="Clayton D.J."/>
            <person name="Windhorst D."/>
            <person name="Vernikos G."/>
            <person name="Davidson S."/>
            <person name="Churcher C."/>
            <person name="Quail M.A."/>
            <person name="Stevens M."/>
            <person name="Jones M.A."/>
            <person name="Watson M."/>
            <person name="Barron A."/>
            <person name="Layton A."/>
            <person name="Pickard D."/>
            <person name="Kingsley R.A."/>
            <person name="Bignell A."/>
            <person name="Clark L."/>
            <person name="Harris B."/>
            <person name="Ormond D."/>
            <person name="Abdellah Z."/>
            <person name="Brooks K."/>
            <person name="Cherevach I."/>
            <person name="Chillingworth T."/>
            <person name="Woodward J."/>
            <person name="Norberczak H."/>
            <person name="Lord A."/>
            <person name="Arrowsmith C."/>
            <person name="Jagels K."/>
            <person name="Moule S."/>
            <person name="Mungall K."/>
            <person name="Saunders M."/>
            <person name="Whitehead S."/>
            <person name="Chabalgoity J.A."/>
            <person name="Maskell D."/>
            <person name="Humphreys T."/>
            <person name="Roberts M."/>
            <person name="Barrow P.A."/>
            <person name="Dougan G."/>
            <person name="Parkhill J."/>
        </authorList>
    </citation>
    <scope>NUCLEOTIDE SEQUENCE [LARGE SCALE GENOMIC DNA]</scope>
    <source>
        <strain>P125109</strain>
    </source>
</reference>
<protein>
    <recommendedName>
        <fullName evidence="1">UPF0266 membrane protein YobD</fullName>
    </recommendedName>
</protein>